<name>PACN2_MOUSE</name>
<proteinExistence type="evidence at protein level"/>
<accession>Q9WVE8</accession>
<evidence type="ECO:0000250" key="1"/>
<evidence type="ECO:0000250" key="2">
    <source>
        <dbReference type="UniProtKB" id="Q9UNF0"/>
    </source>
</evidence>
<evidence type="ECO:0000255" key="3">
    <source>
        <dbReference type="PROSITE-ProRule" id="PRU00192"/>
    </source>
</evidence>
<evidence type="ECO:0000255" key="4">
    <source>
        <dbReference type="PROSITE-ProRule" id="PRU01077"/>
    </source>
</evidence>
<evidence type="ECO:0000256" key="5">
    <source>
        <dbReference type="SAM" id="MobiDB-lite"/>
    </source>
</evidence>
<evidence type="ECO:0000269" key="6">
    <source>
    </source>
</evidence>
<evidence type="ECO:0000269" key="7">
    <source>
    </source>
</evidence>
<evidence type="ECO:0000269" key="8">
    <source>
    </source>
</evidence>
<evidence type="ECO:0000269" key="9">
    <source>
    </source>
</evidence>
<evidence type="ECO:0000269" key="10">
    <source>
    </source>
</evidence>
<evidence type="ECO:0000269" key="11">
    <source>
    </source>
</evidence>
<evidence type="ECO:0000269" key="12">
    <source>
    </source>
</evidence>
<evidence type="ECO:0000269" key="13">
    <source>
    </source>
</evidence>
<evidence type="ECO:0000269" key="14">
    <source>
    </source>
</evidence>
<evidence type="ECO:0000269" key="15">
    <source>
    </source>
</evidence>
<evidence type="ECO:0000269" key="16">
    <source>
    </source>
</evidence>
<evidence type="ECO:0000269" key="17">
    <source>
    </source>
</evidence>
<evidence type="ECO:0000305" key="18"/>
<evidence type="ECO:0007744" key="19">
    <source>
    </source>
</evidence>
<evidence type="ECO:0007744" key="20">
    <source>
    </source>
</evidence>
<evidence type="ECO:0007829" key="21">
    <source>
        <dbReference type="PDB" id="3LLL"/>
    </source>
</evidence>
<sequence length="486" mass="55833">MSVTYDDSVGVEVSSDSFWEVGNYKRTVKRIDDGHRLCGDLMNCLHERARIEKAYAQQLTEWARRWRQLVEKGPQYGTVEKAWIAVMSEAERVSELHLEVKASLMNEDFEKIKNWQKEAFHKQMMGGFKETKEAEDGFRKAQKPWAKKLKEVEAAKKAHHTACKEEKLAISREANSKADPSLNPEQLKKLQDKIEKCKQDVLKTKDKYEKSLKELDQTTPQYMENMEQVFEQCQQFEEKRLRFFREVLLEVQKHLDLSNVASYKTIYRELEQSIKAADAVEDLRWFRANHGPGMAMNWPQFEEWSADLNRTLSRREKKKAVDGVTLTGINQTGDQSGQNKPGSNLSVPSNPAQSTQLQSSYNPFEDEDDTGSSISEKEDIKAKNVSSYEKTQTYPTDWSDDESNNPFSSTDANGDSNPFDEDTTSGTEVRVRALYDYEGQEHDELSFKAGDELTKIEDEDEQGWCKGRLDSGQVGLYPANYVEAIQ</sequence>
<protein>
    <recommendedName>
        <fullName>Protein kinase C and casein kinase substrate in neurons protein 2</fullName>
    </recommendedName>
    <alternativeName>
        <fullName>Syndapin-2</fullName>
    </alternativeName>
    <alternativeName>
        <fullName>Syndapin-II</fullName>
        <shortName>SdpII</shortName>
    </alternativeName>
</protein>
<organism>
    <name type="scientific">Mus musculus</name>
    <name type="common">Mouse</name>
    <dbReference type="NCBI Taxonomy" id="10090"/>
    <lineage>
        <taxon>Eukaryota</taxon>
        <taxon>Metazoa</taxon>
        <taxon>Chordata</taxon>
        <taxon>Craniata</taxon>
        <taxon>Vertebrata</taxon>
        <taxon>Euteleostomi</taxon>
        <taxon>Mammalia</taxon>
        <taxon>Eutheria</taxon>
        <taxon>Euarchontoglires</taxon>
        <taxon>Glires</taxon>
        <taxon>Rodentia</taxon>
        <taxon>Myomorpha</taxon>
        <taxon>Muroidea</taxon>
        <taxon>Muridae</taxon>
        <taxon>Murinae</taxon>
        <taxon>Mus</taxon>
        <taxon>Mus</taxon>
    </lineage>
</organism>
<reference key="1">
    <citation type="journal article" date="1999" name="FEBS Lett.">
        <title>PACSIN 2, a novel member of the PACSIN family of cytoplasmic adapter proteins.</title>
        <authorList>
            <person name="Ritter B."/>
            <person name="Modregger J."/>
            <person name="Paulsson M."/>
            <person name="Plomann M."/>
        </authorList>
    </citation>
    <scope>NUCLEOTIDE SEQUENCE [MRNA]</scope>
    <scope>SUBCELLULAR LOCATION</scope>
    <scope>TISSUE SPECIFICITY</scope>
    <source>
        <strain>C57BL/6 X DBA</strain>
    </source>
</reference>
<reference key="2">
    <citation type="journal article" date="2004" name="Genome Res.">
        <title>The status, quality, and expansion of the NIH full-length cDNA project: the Mammalian Gene Collection (MGC).</title>
        <authorList>
            <consortium name="The MGC Project Team"/>
        </authorList>
    </citation>
    <scope>NUCLEOTIDE SEQUENCE [LARGE SCALE MRNA]</scope>
    <source>
        <tissue>Mammary gland</tissue>
    </source>
</reference>
<reference key="3">
    <citation type="journal article" date="2000" name="J. Cell Sci.">
        <title>All three PACSIN isoforms bind to endocytic proteins and inhibit endocytosis.</title>
        <authorList>
            <person name="Modregger J."/>
            <person name="Ritter B."/>
            <person name="Witter B."/>
            <person name="Paulsson M."/>
            <person name="Plomann M."/>
        </authorList>
    </citation>
    <scope>FUNCTION</scope>
    <scope>INTERACTION WITH DNM1; SYNJ1 AND WASL</scope>
    <scope>HOMOOLIGOMERIZATION</scope>
    <scope>HETEROOLIGOMERIZATION WITH PACSIN1 AND PACSIN3</scope>
    <scope>SUBCELLULAR LOCATION</scope>
    <scope>TISSUE SPECIFICITY</scope>
    <scope>MUTAGENESIS OF PRO-478</scope>
</reference>
<reference key="4">
    <citation type="journal article" date="2005" name="Mol. Biol. Cell">
        <title>EHD proteins associate with syndapin I and II and such interactions play a crucial role in endosomal recycling.</title>
        <authorList>
            <person name="Braun A."/>
            <person name="Pinyol R."/>
            <person name="Dahlhaus R."/>
            <person name="Koch D."/>
            <person name="Fonarev P."/>
            <person name="Grant B.D."/>
            <person name="Kessels M.M."/>
            <person name="Qualmann B."/>
        </authorList>
    </citation>
    <scope>FUNCTION</scope>
    <scope>INTERACTION WITH EHD1 AND EHD3</scope>
    <scope>SUBCELLULAR LOCATION</scope>
</reference>
<reference key="5">
    <citation type="journal article" date="2006" name="J. Biol. Chem.">
        <title>PACSINs bind to the TRPV4 cation channel. PACSIN 3 modulates the subcellular localization of TRPV4.</title>
        <authorList>
            <person name="Cuajungco M.P."/>
            <person name="Grimm C."/>
            <person name="Oshima K."/>
            <person name="D'hoedt D."/>
            <person name="Nilius B."/>
            <person name="Mensenkamp A.R."/>
            <person name="Bindels R.J."/>
            <person name="Plomann M."/>
            <person name="Heller S."/>
        </authorList>
    </citation>
    <scope>INTERACTION WITH TRPV4</scope>
</reference>
<reference key="6">
    <citation type="journal article" date="2010" name="Cell">
        <title>A tissue-specific atlas of mouse protein phosphorylation and expression.</title>
        <authorList>
            <person name="Huttlin E.L."/>
            <person name="Jedrychowski M.P."/>
            <person name="Elias J.E."/>
            <person name="Goswami T."/>
            <person name="Rad R."/>
            <person name="Beausoleil S.A."/>
            <person name="Villen J."/>
            <person name="Haas W."/>
            <person name="Sowa M.E."/>
            <person name="Gygi S.P."/>
        </authorList>
    </citation>
    <scope>PHOSPHORYLATION [LARGE SCALE ANALYSIS] AT SER-399</scope>
    <scope>IDENTIFICATION BY MASS SPECTROMETRY [LARGE SCALE ANALYSIS]</scope>
    <source>
        <tissue>Brain</tissue>
        <tissue>Brown adipose tissue</tissue>
        <tissue>Heart</tissue>
        <tissue>Kidney</tissue>
        <tissue>Liver</tissue>
        <tissue>Lung</tissue>
        <tissue>Pancreas</tissue>
        <tissue>Spleen</tissue>
        <tissue>Testis</tissue>
    </source>
</reference>
<reference key="7">
    <citation type="journal article" date="2010" name="FEBS Lett.">
        <title>Mapping of the basic amino-acid residues responsible for tubulation and cellular protrusion by the EFC/F-BAR domain of pacsin2/Syndapin II.</title>
        <authorList>
            <person name="Shimada A."/>
            <person name="Takano K."/>
            <person name="Shirouzu M."/>
            <person name="Hanawa-Suetsugu K."/>
            <person name="Terada T."/>
            <person name="Toyooka K."/>
            <person name="Umehara T."/>
            <person name="Yamamoto M."/>
            <person name="Yokoyama S."/>
            <person name="Suetsugu S."/>
        </authorList>
    </citation>
    <scope>FUNCTION</scope>
    <scope>DOMAIN</scope>
    <scope>SUBCELLULAR LOCATION</scope>
    <scope>MUTAGENESIS OF ASP-40; ARG-50; 124-MET-MET-125 AND LYS-189</scope>
</reference>
<reference key="8">
    <citation type="journal article" date="2011" name="J. Cell Sci.">
        <title>Essential role of PACSIN2/syndapin-II in caveolae membrane sculpting.</title>
        <authorList>
            <person name="Senju Y."/>
            <person name="Itoh Y."/>
            <person name="Takano K."/>
            <person name="Hamada S."/>
            <person name="Suetsugu S."/>
        </authorList>
    </citation>
    <scope>FUNCTION</scope>
    <scope>DOMAIN</scope>
    <scope>SUBCELLULAR LOCATION</scope>
    <scope>INTERACTION WITH CAV1</scope>
    <scope>DISRUPTION PHENOTYPE</scope>
</reference>
<reference key="9">
    <citation type="journal article" date="2011" name="J. Cell Sci.">
        <title>The F-BAR domain protein PACSIN2 associates with Rac1 and regulates cell spreading and migration.</title>
        <authorList>
            <person name="de Kreuk B.J."/>
            <person name="Nethe M."/>
            <person name="Fernandez-Borja M."/>
            <person name="Anthony E.C."/>
            <person name="Hensbergen P.J."/>
            <person name="Deelder A.M."/>
            <person name="Plomann M."/>
            <person name="Hordijk P.L."/>
        </authorList>
    </citation>
    <scope>FUNCTION</scope>
    <scope>SUBCELLULAR LOCATION</scope>
    <scope>INTERACTION WITH RAC1</scope>
</reference>
<reference key="10">
    <citation type="journal article" date="2011" name="J. Cell Sci.">
        <title>Pacsin 2 is recruited to caveolae and functions in caveolar biogenesis.</title>
        <authorList>
            <person name="Hansen C.G."/>
            <person name="Howard G."/>
            <person name="Nichols B.J."/>
        </authorList>
    </citation>
    <scope>FUNCTION</scope>
    <scope>SUBCELLULAR LOCATION</scope>
    <scope>DISRUPTION PHENOTYPE</scope>
</reference>
<reference key="11">
    <citation type="journal article" date="2012" name="J. Biol. Chem.">
        <title>The F-BAR protein PACSIN2 regulates epidermal growth factor receptor internalization.</title>
        <authorList>
            <person name="de Kreuk B.J."/>
            <person name="Anthony E.C."/>
            <person name="Geerts D."/>
            <person name="Hordijk P.L."/>
        </authorList>
    </citation>
    <scope>FUNCTION</scope>
    <scope>SUBCELLULAR LOCATION</scope>
</reference>
<reference key="12">
    <citation type="journal article" date="2013" name="Mol. Cell">
        <title>SIRT5-mediated lysine desuccinylation impacts diverse metabolic pathways.</title>
        <authorList>
            <person name="Park J."/>
            <person name="Chen Y."/>
            <person name="Tishkoff D.X."/>
            <person name="Peng C."/>
            <person name="Tan M."/>
            <person name="Dai L."/>
            <person name="Xie Z."/>
            <person name="Zhang Y."/>
            <person name="Zwaans B.M."/>
            <person name="Skinner M.E."/>
            <person name="Lombard D.B."/>
            <person name="Zhao Y."/>
        </authorList>
    </citation>
    <scope>ACETYLATION [LARGE SCALE ANALYSIS] AT LYS-53</scope>
    <scope>IDENTIFICATION BY MASS SPECTROMETRY [LARGE SCALE ANALYSIS]</scope>
    <source>
        <tissue>Embryonic fibroblast</tissue>
    </source>
</reference>
<reference key="13">
    <citation type="journal article" date="2015" name="J. Cell Sci.">
        <title>Phosphorylation of PACSIN2 by protein kinase C triggers the removal of caveolae from the plasma membrane.</title>
        <authorList>
            <person name="Senju Y."/>
            <person name="Rosenbaum E."/>
            <person name="Shah C."/>
            <person name="Hamada-Nakahara S."/>
            <person name="Itoh Y."/>
            <person name="Yamamoto K."/>
            <person name="Hanawa-Suetsugu K."/>
            <person name="Daumke O."/>
            <person name="Suetsugu S."/>
        </authorList>
    </citation>
    <scope>PHOSPHORYLATION AT SER-313</scope>
    <scope>PHOSPHORYLATION AT SER-373</scope>
    <scope>MUTAGENESIS OF SER-313 AND SER-373</scope>
    <scope>SUBCELLULAR LOCATION</scope>
</reference>
<reference key="14">
    <citation type="journal article" date="2021" name="Nat. Commun.">
        <title>A junctional PACSIN2/EHD4/MICAL-L1 complex coordinates VE-cadherin trafficking for endothelial migration and angiogenesis.</title>
        <authorList>
            <person name="Malinova T.S."/>
            <person name="Angulo-Urarte A."/>
            <person name="Nuechel J."/>
            <person name="Tauber M."/>
            <person name="van der Stoel M.M."/>
            <person name="Janssen V."/>
            <person name="de Haan A."/>
            <person name="Groenen A.G."/>
            <person name="Tebbens M."/>
            <person name="Graupera M."/>
            <person name="Plomann M."/>
            <person name="Huveneers S."/>
        </authorList>
    </citation>
    <scope>FUNCTION</scope>
    <scope>SUBCELLULAR LOCATION</scope>
    <scope>DISRUPTION PHENOTYPE</scope>
    <scope>INTERACTION WITH EHD4 AND MICALL1</scope>
</reference>
<reference key="15">
    <citation type="journal article" date="2010" name="J. Mol. Biol.">
        <title>A hinge in the distal end of the PACSIN 2 F-BAR domain may contribute to membrane-curvature sensing.</title>
        <authorList>
            <person name="Plomann M."/>
            <person name="Wittmann J.G."/>
            <person name="Rudolph M.G."/>
        </authorList>
    </citation>
    <scope>X-RAY CRYSTALLOGRAPHY (3.3 ANGSTROMS) OF 16-302</scope>
    <scope>SUBUNIT</scope>
    <scope>DOMAIN</scope>
</reference>
<comment type="function">
    <text evidence="7 8 10 12 13 14 15 17">Regulates the morphogenesis and endocytosis of caveolae (PubMed:21807942). Lipid-binding protein that is able to promote the tubulation of the phosphatidic acid-containing membranes it preferentially binds. Plays a role in intracellular vesicle-mediated transport. Involved in the endocytosis of cell-surface receptors like the EGF receptor, contributing to its internalization in the absence of EGF stimulus. Essential for endothelial organization in sprouting angiogenesis, modulates CDH5-based junctions. Facilitates endothelial front-rear polarity during migration by recruiting EHD4 and MICALL1 to asymmetric adherens junctions between leader and follower cells (PubMed:33972531).</text>
</comment>
<comment type="subunit">
    <text evidence="2 7 8 9 11 12 13 17">Homodimer (PubMed:20471395). May form heterooligomers with other PACSINs (PubMed:11082044). Interacts (via NPF motifs) with EHD1 (via EH domain) (PubMed:15930129). Interacts (via NPF motifs) with EHD2 (via EH domain); this interaction probably stabilizes the caveolae (By similarity). Interacts with EHD3 (PubMed:15930129). Interacts (via the SH3 domain) with MICALL1 (By similarity). Interacts with RAC1 (PubMed:21693584). Interacts (via SH3 domain) with DNM1, SYN1, SYNJ1 and WASL (PubMed:11082044). Interacts (via F-BAR domain) with CAV1; this interaction induces membrane tubulation (PubMed:21610094). Interacts with TRPV4 (PubMed:16627472). Forms a complex with EHD4 and MICALL1; the complex controls CDH5 trafficking and coordinates angiogenesis (PubMed:33972531).</text>
</comment>
<comment type="subcellular location">
    <subcellularLocation>
        <location>Cytoplasm</location>
    </subcellularLocation>
    <subcellularLocation>
        <location>Cytoplasm</location>
        <location>Cytoskeleton</location>
    </subcellularLocation>
    <subcellularLocation>
        <location>Cytoplasmic vesicle membrane</location>
        <topology>Peripheral membrane protein</topology>
        <orientation>Cytoplasmic side</orientation>
    </subcellularLocation>
    <subcellularLocation>
        <location>Cell projection</location>
        <location>Ruffle membrane</location>
        <topology>Peripheral membrane protein</topology>
        <orientation>Cytoplasmic side</orientation>
    </subcellularLocation>
    <subcellularLocation>
        <location>Early endosome</location>
    </subcellularLocation>
    <subcellularLocation>
        <location evidence="1">Recycling endosome membrane</location>
    </subcellularLocation>
    <subcellularLocation>
        <location>Cell membrane</location>
        <topology>Peripheral membrane protein</topology>
        <orientation>Cytoplasmic side</orientation>
    </subcellularLocation>
    <subcellularLocation>
        <location evidence="2">Cell projection</location>
    </subcellularLocation>
    <subcellularLocation>
        <location evidence="12 14 16">Membrane</location>
        <location evidence="12 14 16">Caveola</location>
    </subcellularLocation>
    <subcellularLocation>
        <location evidence="17">Cell junction</location>
        <location evidence="17">Adherens junction</location>
    </subcellularLocation>
    <text>Detected at the neck of flask-shaped caveolae. Localization to tubular recycling endosomes probably requires interaction with MICALL1 and EHD1.</text>
</comment>
<comment type="tissue specificity">
    <text evidence="6 7">Widely expressed (at protein level).</text>
</comment>
<comment type="domain">
    <text evidence="2 10 11 12">The F-BAR domain forms a coiled coil and mediates membrane-binding and membrane tubulation (PubMed:20188097, PubMed:20471395). Autoinhibition of these functions is mediated by an interaction between the SH3 and F-BAR domains (By similarity). The F-Bar domain also mediates the binding to the cell actin cytoskeleton through the interaction with CAV-1 (PubMed:21610094).</text>
</comment>
<comment type="PTM">
    <text evidence="16">Phosphorylated by casein kinase 2 (CK2). Phosphorylation by PKC probably decreases the membrane binding and tubulation capacities of PACSIN2, thereby modulating the lifetime of caveolae (PubMed:26092940).</text>
</comment>
<comment type="disruption phenotype">
    <text evidence="12 14 17">Mutants are viable, fertile and appear healthy withouth major defects or bleedings (PubMed:33972531). Mutants show a loss of morphologically defined caveolae.</text>
</comment>
<comment type="similarity">
    <text evidence="18">Belongs to the PACSIN family.</text>
</comment>
<feature type="chain" id="PRO_0000161796" description="Protein kinase C and casein kinase substrate in neurons protein 2">
    <location>
        <begin position="1"/>
        <end position="486"/>
    </location>
</feature>
<feature type="domain" description="F-BAR" evidence="4">
    <location>
        <begin position="11"/>
        <end position="282"/>
    </location>
</feature>
<feature type="domain" description="SH3" evidence="3">
    <location>
        <begin position="426"/>
        <end position="486"/>
    </location>
</feature>
<feature type="region of interest" description="Disordered" evidence="5">
    <location>
        <begin position="315"/>
        <end position="426"/>
    </location>
</feature>
<feature type="coiled-coil region">
    <location>
        <begin position="25"/>
        <end position="274"/>
    </location>
</feature>
<feature type="short sequence motif" description="NPF1">
    <location>
        <begin position="362"/>
        <end position="364"/>
    </location>
</feature>
<feature type="short sequence motif" description="NPF2">
    <location>
        <begin position="405"/>
        <end position="407"/>
    </location>
</feature>
<feature type="short sequence motif" description="NPF3">
    <location>
        <begin position="417"/>
        <end position="419"/>
    </location>
</feature>
<feature type="compositionally biased region" description="Polar residues" evidence="5">
    <location>
        <begin position="327"/>
        <end position="362"/>
    </location>
</feature>
<feature type="compositionally biased region" description="Polar residues" evidence="5">
    <location>
        <begin position="384"/>
        <end position="396"/>
    </location>
</feature>
<feature type="compositionally biased region" description="Polar residues" evidence="5">
    <location>
        <begin position="404"/>
        <end position="416"/>
    </location>
</feature>
<feature type="modified residue" description="N6-acetyllysine" evidence="20">
    <location>
        <position position="53"/>
    </location>
</feature>
<feature type="modified residue" description="Phosphoserine" evidence="2">
    <location>
        <position position="273"/>
    </location>
</feature>
<feature type="modified residue" description="Phosphoserine; by PKC" evidence="16">
    <location>
        <position position="313"/>
    </location>
</feature>
<feature type="modified residue" description="Phosphoserine; by IKKB" evidence="16">
    <location>
        <position position="373"/>
    </location>
</feature>
<feature type="modified residue" description="Phosphoserine" evidence="19">
    <location>
        <position position="399"/>
    </location>
</feature>
<feature type="modified residue" description="Phosphoserine" evidence="2">
    <location>
        <position position="446"/>
    </location>
</feature>
<feature type="mutagenesis site" description="Slight increase in affinity for membranes. Increases membrane tubulation activity." evidence="10">
    <original>D</original>
    <variation>K</variation>
    <location>
        <position position="40"/>
    </location>
</feature>
<feature type="mutagenesis site" description="Slight decrease in affinity for membranes. Nearly abolishes membrane tubulation activity." evidence="10">
    <original>R</original>
    <variation>D</variation>
    <location>
        <position position="50"/>
    </location>
</feature>
<feature type="mutagenesis site" description="Nearly abolishes membrane tubulation activity." evidence="10">
    <original>MM</original>
    <variation>TT</variation>
    <location>
        <begin position="124"/>
        <end position="125"/>
    </location>
</feature>
<feature type="mutagenesis site" description="Decreases affinity for membranes." evidence="10">
    <original>K</original>
    <variation>E</variation>
    <location>
        <position position="189"/>
    </location>
</feature>
<feature type="mutagenesis site" description="Reduced membrane-binding affinity." evidence="16">
    <original>S</original>
    <variation>E</variation>
    <location>
        <position position="313"/>
    </location>
</feature>
<feature type="mutagenesis site" description="Reduced membrane-binding affinity." evidence="16">
    <original>S</original>
    <variation>D</variation>
    <location>
        <position position="373"/>
    </location>
</feature>
<feature type="mutagenesis site" description="Loss of DNM1-, SYNJ1- and WASL-binding." evidence="7">
    <original>P</original>
    <variation>L</variation>
    <location>
        <position position="478"/>
    </location>
</feature>
<feature type="turn" evidence="21">
    <location>
        <begin position="21"/>
        <end position="24"/>
    </location>
</feature>
<feature type="helix" evidence="21">
    <location>
        <begin position="25"/>
        <end position="71"/>
    </location>
</feature>
<feature type="helix" evidence="21">
    <location>
        <begin position="77"/>
        <end position="106"/>
    </location>
</feature>
<feature type="helix" evidence="21">
    <location>
        <begin position="108"/>
        <end position="117"/>
    </location>
</feature>
<feature type="strand" evidence="21">
    <location>
        <begin position="124"/>
        <end position="128"/>
    </location>
</feature>
<feature type="helix" evidence="21">
    <location>
        <begin position="131"/>
        <end position="174"/>
    </location>
</feature>
<feature type="helix" evidence="21">
    <location>
        <begin position="184"/>
        <end position="192"/>
    </location>
</feature>
<feature type="turn" evidence="21">
    <location>
        <begin position="193"/>
        <end position="198"/>
    </location>
</feature>
<feature type="helix" evidence="21">
    <location>
        <begin position="199"/>
        <end position="202"/>
    </location>
</feature>
<feature type="helix" evidence="21">
    <location>
        <begin position="204"/>
        <end position="216"/>
    </location>
</feature>
<feature type="helix" evidence="21">
    <location>
        <begin position="220"/>
        <end position="255"/>
    </location>
</feature>
<feature type="helix" evidence="21">
    <location>
        <begin position="261"/>
        <end position="275"/>
    </location>
</feature>
<feature type="helix" evidence="21">
    <location>
        <begin position="279"/>
        <end position="289"/>
    </location>
</feature>
<gene>
    <name type="primary">Pacsin2</name>
</gene>
<keyword id="KW-0002">3D-structure</keyword>
<keyword id="KW-0007">Acetylation</keyword>
<keyword id="KW-0965">Cell junction</keyword>
<keyword id="KW-1003">Cell membrane</keyword>
<keyword id="KW-0966">Cell projection</keyword>
<keyword id="KW-0175">Coiled coil</keyword>
<keyword id="KW-0963">Cytoplasm</keyword>
<keyword id="KW-0968">Cytoplasmic vesicle</keyword>
<keyword id="KW-0206">Cytoskeleton</keyword>
<keyword id="KW-0254">Endocytosis</keyword>
<keyword id="KW-0967">Endosome</keyword>
<keyword id="KW-0446">Lipid-binding</keyword>
<keyword id="KW-0472">Membrane</keyword>
<keyword id="KW-0597">Phosphoprotein</keyword>
<keyword id="KW-1185">Reference proteome</keyword>
<keyword id="KW-0728">SH3 domain</keyword>
<dbReference type="EMBL" id="AF128535">
    <property type="protein sequence ID" value="AAD41780.1"/>
    <property type="molecule type" value="mRNA"/>
</dbReference>
<dbReference type="EMBL" id="BC023502">
    <property type="protein sequence ID" value="AAH23502.1"/>
    <property type="molecule type" value="mRNA"/>
</dbReference>
<dbReference type="CCDS" id="CCDS27701.1"/>
<dbReference type="RefSeq" id="NP_001152981.1">
    <property type="nucleotide sequence ID" value="NM_001159509.2"/>
</dbReference>
<dbReference type="RefSeq" id="NP_001152982.1">
    <property type="nucleotide sequence ID" value="NM_001159510.2"/>
</dbReference>
<dbReference type="RefSeq" id="NP_001398779.1">
    <property type="nucleotide sequence ID" value="NM_001411850.1"/>
</dbReference>
<dbReference type="RefSeq" id="NP_001398780.1">
    <property type="nucleotide sequence ID" value="NM_001411851.1"/>
</dbReference>
<dbReference type="RefSeq" id="NP_035992.1">
    <property type="nucleotide sequence ID" value="NM_011862.4"/>
</dbReference>
<dbReference type="PDB" id="3LLL">
    <property type="method" value="X-ray"/>
    <property type="resolution" value="3.30 A"/>
    <property type="chains" value="A/B=16-302"/>
</dbReference>
<dbReference type="PDBsum" id="3LLL"/>
<dbReference type="SMR" id="Q9WVE8"/>
<dbReference type="BioGRID" id="204831">
    <property type="interactions" value="16"/>
</dbReference>
<dbReference type="CORUM" id="Q9WVE8"/>
<dbReference type="FunCoup" id="Q9WVE8">
    <property type="interactions" value="2970"/>
</dbReference>
<dbReference type="IntAct" id="Q9WVE8">
    <property type="interactions" value="2"/>
</dbReference>
<dbReference type="MINT" id="Q9WVE8"/>
<dbReference type="STRING" id="10090.ENSMUSP00000131504"/>
<dbReference type="ChEMBL" id="CHEMBL2176817"/>
<dbReference type="GlyGen" id="Q9WVE8">
    <property type="glycosylation" value="2 sites, 1 N-linked glycan (1 site), 1 O-linked glycan (1 site)"/>
</dbReference>
<dbReference type="iPTMnet" id="Q9WVE8"/>
<dbReference type="PhosphoSitePlus" id="Q9WVE8"/>
<dbReference type="SwissPalm" id="Q9WVE8"/>
<dbReference type="jPOST" id="Q9WVE8"/>
<dbReference type="PaxDb" id="10090-ENSMUSP00000130098"/>
<dbReference type="ProteomicsDB" id="294099"/>
<dbReference type="Pumba" id="Q9WVE8"/>
<dbReference type="Antibodypedia" id="34964">
    <property type="antibodies" value="221 antibodies from 31 providers"/>
</dbReference>
<dbReference type="DNASU" id="23970"/>
<dbReference type="Ensembl" id="ENSMUST00000165095.9">
    <property type="protein sequence ID" value="ENSMUSP00000130098.2"/>
    <property type="gene ID" value="ENSMUSG00000016664.18"/>
</dbReference>
<dbReference type="Ensembl" id="ENSMUST00000171436.8">
    <property type="protein sequence ID" value="ENSMUSP00000131504.2"/>
    <property type="gene ID" value="ENSMUSG00000016664.18"/>
</dbReference>
<dbReference type="Ensembl" id="ENSMUST00000230679.2">
    <property type="protein sequence ID" value="ENSMUSP00000155481.2"/>
    <property type="gene ID" value="ENSMUSG00000016664.18"/>
</dbReference>
<dbReference type="Ensembl" id="ENSMUST00000231184.2">
    <property type="protein sequence ID" value="ENSMUSP00000155334.2"/>
    <property type="gene ID" value="ENSMUSG00000016664.18"/>
</dbReference>
<dbReference type="GeneID" id="23970"/>
<dbReference type="KEGG" id="mmu:23970"/>
<dbReference type="UCSC" id="uc007xba.2">
    <property type="organism name" value="mouse"/>
</dbReference>
<dbReference type="AGR" id="MGI:1345153"/>
<dbReference type="CTD" id="11252"/>
<dbReference type="MGI" id="MGI:1345153">
    <property type="gene designation" value="Pacsin2"/>
</dbReference>
<dbReference type="VEuPathDB" id="HostDB:ENSMUSG00000016664"/>
<dbReference type="eggNOG" id="KOG2856">
    <property type="taxonomic scope" value="Eukaryota"/>
</dbReference>
<dbReference type="GeneTree" id="ENSGT00950000182973"/>
<dbReference type="HOGENOM" id="CLU_030752_0_0_1"/>
<dbReference type="InParanoid" id="Q9WVE8"/>
<dbReference type="OMA" id="AMAHVFK"/>
<dbReference type="OrthoDB" id="10255128at2759"/>
<dbReference type="PhylomeDB" id="Q9WVE8"/>
<dbReference type="TreeFam" id="TF313677"/>
<dbReference type="Reactome" id="R-MMU-8856828">
    <property type="pathway name" value="Clathrin-mediated endocytosis"/>
</dbReference>
<dbReference type="BioGRID-ORCS" id="23970">
    <property type="hits" value="2 hits in 76 CRISPR screens"/>
</dbReference>
<dbReference type="CD-CODE" id="01CA17F3">
    <property type="entry name" value="Centrosome"/>
</dbReference>
<dbReference type="ChiTaRS" id="Pacsin2">
    <property type="organism name" value="mouse"/>
</dbReference>
<dbReference type="EvolutionaryTrace" id="Q9WVE8"/>
<dbReference type="PRO" id="PR:Q9WVE8"/>
<dbReference type="Proteomes" id="UP000000589">
    <property type="component" value="Chromosome 15"/>
</dbReference>
<dbReference type="RNAct" id="Q9WVE8">
    <property type="molecule type" value="protein"/>
</dbReference>
<dbReference type="Bgee" id="ENSMUSG00000016664">
    <property type="expression patterns" value="Expressed in interventricular septum and 251 other cell types or tissues"/>
</dbReference>
<dbReference type="ExpressionAtlas" id="Q9WVE8">
    <property type="expression patterns" value="baseline and differential"/>
</dbReference>
<dbReference type="GO" id="GO:0005912">
    <property type="term" value="C:adherens junction"/>
    <property type="evidence" value="ECO:0000314"/>
    <property type="project" value="UniProt"/>
</dbReference>
<dbReference type="GO" id="GO:0005901">
    <property type="term" value="C:caveola"/>
    <property type="evidence" value="ECO:0000314"/>
    <property type="project" value="UniProtKB"/>
</dbReference>
<dbReference type="GO" id="GO:0005911">
    <property type="term" value="C:cell-cell junction"/>
    <property type="evidence" value="ECO:0000314"/>
    <property type="project" value="MGI"/>
</dbReference>
<dbReference type="GO" id="GO:0034451">
    <property type="term" value="C:centriolar satellite"/>
    <property type="evidence" value="ECO:0007669"/>
    <property type="project" value="Ensembl"/>
</dbReference>
<dbReference type="GO" id="GO:0005929">
    <property type="term" value="C:cilium"/>
    <property type="evidence" value="ECO:0007669"/>
    <property type="project" value="Ensembl"/>
</dbReference>
<dbReference type="GO" id="GO:0005737">
    <property type="term" value="C:cytoplasm"/>
    <property type="evidence" value="ECO:0000314"/>
    <property type="project" value="MGI"/>
</dbReference>
<dbReference type="GO" id="GO:0005829">
    <property type="term" value="C:cytosol"/>
    <property type="evidence" value="ECO:0000314"/>
    <property type="project" value="MGI"/>
</dbReference>
<dbReference type="GO" id="GO:0005769">
    <property type="term" value="C:early endosome"/>
    <property type="evidence" value="ECO:0007669"/>
    <property type="project" value="UniProtKB-SubCell"/>
</dbReference>
<dbReference type="GO" id="GO:0098978">
    <property type="term" value="C:glutamatergic synapse"/>
    <property type="evidence" value="ECO:0000314"/>
    <property type="project" value="SynGO"/>
</dbReference>
<dbReference type="GO" id="GO:0016607">
    <property type="term" value="C:nuclear speck"/>
    <property type="evidence" value="ECO:0007669"/>
    <property type="project" value="Ensembl"/>
</dbReference>
<dbReference type="GO" id="GO:0005886">
    <property type="term" value="C:plasma membrane"/>
    <property type="evidence" value="ECO:0000314"/>
    <property type="project" value="UniProtKB"/>
</dbReference>
<dbReference type="GO" id="GO:0055038">
    <property type="term" value="C:recycling endosome membrane"/>
    <property type="evidence" value="ECO:0007669"/>
    <property type="project" value="UniProtKB-SubCell"/>
</dbReference>
<dbReference type="GO" id="GO:0032587">
    <property type="term" value="C:ruffle membrane"/>
    <property type="evidence" value="ECO:0007669"/>
    <property type="project" value="UniProtKB-SubCell"/>
</dbReference>
<dbReference type="GO" id="GO:0008092">
    <property type="term" value="F:cytoskeletal protein binding"/>
    <property type="evidence" value="ECO:0000314"/>
    <property type="project" value="MGI"/>
</dbReference>
<dbReference type="GO" id="GO:0042802">
    <property type="term" value="F:identical protein binding"/>
    <property type="evidence" value="ECO:0007669"/>
    <property type="project" value="Ensembl"/>
</dbReference>
<dbReference type="GO" id="GO:0008289">
    <property type="term" value="F:lipid binding"/>
    <property type="evidence" value="ECO:0000314"/>
    <property type="project" value="UniProtKB"/>
</dbReference>
<dbReference type="GO" id="GO:0070300">
    <property type="term" value="F:phosphatidic acid binding"/>
    <property type="evidence" value="ECO:0000250"/>
    <property type="project" value="UniProtKB"/>
</dbReference>
<dbReference type="GO" id="GO:0030674">
    <property type="term" value="F:protein-macromolecule adaptor activity"/>
    <property type="evidence" value="ECO:0000314"/>
    <property type="project" value="UniProt"/>
</dbReference>
<dbReference type="GO" id="GO:0030036">
    <property type="term" value="P:actin cytoskeleton organization"/>
    <property type="evidence" value="ECO:0007669"/>
    <property type="project" value="InterPro"/>
</dbReference>
<dbReference type="GO" id="GO:0070836">
    <property type="term" value="P:caveola assembly"/>
    <property type="evidence" value="ECO:0000250"/>
    <property type="project" value="UniProtKB"/>
</dbReference>
<dbReference type="GO" id="GO:0072584">
    <property type="term" value="P:caveolin-mediated endocytosis"/>
    <property type="evidence" value="ECO:0000250"/>
    <property type="project" value="UniProtKB"/>
</dbReference>
<dbReference type="GO" id="GO:0002042">
    <property type="term" value="P:cell migration involved in sprouting angiogenesis"/>
    <property type="evidence" value="ECO:0000314"/>
    <property type="project" value="UniProt"/>
</dbReference>
<dbReference type="GO" id="GO:0048858">
    <property type="term" value="P:cell projection morphogenesis"/>
    <property type="evidence" value="ECO:0000315"/>
    <property type="project" value="UniProtKB"/>
</dbReference>
<dbReference type="GO" id="GO:0050804">
    <property type="term" value="P:modulation of chemical synaptic transmission"/>
    <property type="evidence" value="ECO:0000314"/>
    <property type="project" value="SynGO"/>
</dbReference>
<dbReference type="GO" id="GO:0045806">
    <property type="term" value="P:negative regulation of endocytosis"/>
    <property type="evidence" value="ECO:0000314"/>
    <property type="project" value="MGI"/>
</dbReference>
<dbReference type="GO" id="GO:0097320">
    <property type="term" value="P:plasma membrane tubulation"/>
    <property type="evidence" value="ECO:0000315"/>
    <property type="project" value="UniProtKB"/>
</dbReference>
<dbReference type="GO" id="GO:0036010">
    <property type="term" value="P:protein localization to endosome"/>
    <property type="evidence" value="ECO:0007669"/>
    <property type="project" value="Ensembl"/>
</dbReference>
<dbReference type="GO" id="GO:0007165">
    <property type="term" value="P:signal transduction"/>
    <property type="evidence" value="ECO:0000304"/>
    <property type="project" value="MGI"/>
</dbReference>
<dbReference type="CDD" id="cd07679">
    <property type="entry name" value="F-BAR_PACSIN2"/>
    <property type="match status" value="1"/>
</dbReference>
<dbReference type="CDD" id="cd11998">
    <property type="entry name" value="SH3_PACSIN1-2"/>
    <property type="match status" value="1"/>
</dbReference>
<dbReference type="FunFam" id="2.30.30.40:FF:000014">
    <property type="entry name" value="Kinase C and casein kinase substrate in neurons protein"/>
    <property type="match status" value="1"/>
</dbReference>
<dbReference type="FunFam" id="1.20.1270.60:FF:000205">
    <property type="entry name" value="Protein kinase C and casein kinase substrate in neurons protein 1"/>
    <property type="match status" value="1"/>
</dbReference>
<dbReference type="Gene3D" id="1.20.1270.60">
    <property type="entry name" value="Arfaptin homology (AH) domain/BAR domain"/>
    <property type="match status" value="1"/>
</dbReference>
<dbReference type="Gene3D" id="2.30.30.40">
    <property type="entry name" value="SH3 Domains"/>
    <property type="match status" value="1"/>
</dbReference>
<dbReference type="InterPro" id="IPR027267">
    <property type="entry name" value="AH/BAR_dom_sf"/>
</dbReference>
<dbReference type="InterPro" id="IPR031160">
    <property type="entry name" value="F_BAR"/>
</dbReference>
<dbReference type="InterPro" id="IPR001060">
    <property type="entry name" value="FCH_dom"/>
</dbReference>
<dbReference type="InterPro" id="IPR035743">
    <property type="entry name" value="PACSIN1/PACSIN2_SH3"/>
</dbReference>
<dbReference type="InterPro" id="IPR037453">
    <property type="entry name" value="PACSIN2_F-BAR"/>
</dbReference>
<dbReference type="InterPro" id="IPR036028">
    <property type="entry name" value="SH3-like_dom_sf"/>
</dbReference>
<dbReference type="InterPro" id="IPR001452">
    <property type="entry name" value="SH3_domain"/>
</dbReference>
<dbReference type="PANTHER" id="PTHR23065">
    <property type="entry name" value="PROLINE-SERINE-THREONINE PHOSPHATASE INTERACTING PROTEIN 1"/>
    <property type="match status" value="1"/>
</dbReference>
<dbReference type="PANTHER" id="PTHR23065:SF14">
    <property type="entry name" value="PROTEIN KINASE C AND CASEIN KINASE SUBSTRATE IN NEURONS PROTEIN 2"/>
    <property type="match status" value="1"/>
</dbReference>
<dbReference type="Pfam" id="PF00611">
    <property type="entry name" value="FCH"/>
    <property type="match status" value="1"/>
</dbReference>
<dbReference type="Pfam" id="PF14604">
    <property type="entry name" value="SH3_9"/>
    <property type="match status" value="1"/>
</dbReference>
<dbReference type="PRINTS" id="PR00452">
    <property type="entry name" value="SH3DOMAIN"/>
</dbReference>
<dbReference type="SMART" id="SM00055">
    <property type="entry name" value="FCH"/>
    <property type="match status" value="1"/>
</dbReference>
<dbReference type="SMART" id="SM00326">
    <property type="entry name" value="SH3"/>
    <property type="match status" value="1"/>
</dbReference>
<dbReference type="SUPFAM" id="SSF103657">
    <property type="entry name" value="BAR/IMD domain-like"/>
    <property type="match status" value="1"/>
</dbReference>
<dbReference type="SUPFAM" id="SSF50044">
    <property type="entry name" value="SH3-domain"/>
    <property type="match status" value="1"/>
</dbReference>
<dbReference type="PROSITE" id="PS51741">
    <property type="entry name" value="F_BAR"/>
    <property type="match status" value="1"/>
</dbReference>
<dbReference type="PROSITE" id="PS50002">
    <property type="entry name" value="SH3"/>
    <property type="match status" value="1"/>
</dbReference>